<comment type="subunit">
    <text evidence="1">Forms oligomers.</text>
</comment>
<comment type="subcellular location">
    <subcellularLocation>
        <location evidence="1">Cytoplasm</location>
        <location evidence="1">Nucleoid</location>
    </subcellularLocation>
</comment>
<comment type="similarity">
    <text evidence="1">Belongs to the MraZ family.</text>
</comment>
<gene>
    <name evidence="1" type="primary">mraZ</name>
    <name type="ordered locus">Bmul_2845</name>
    <name type="ordered locus">BMULJ_00393</name>
</gene>
<protein>
    <recommendedName>
        <fullName>Transcriptional regulator MraZ</fullName>
    </recommendedName>
</protein>
<accession>A9AJ25</accession>
<keyword id="KW-0963">Cytoplasm</keyword>
<keyword id="KW-0238">DNA-binding</keyword>
<keyword id="KW-1185">Reference proteome</keyword>
<keyword id="KW-0677">Repeat</keyword>
<keyword id="KW-0804">Transcription</keyword>
<keyword id="KW-0805">Transcription regulation</keyword>
<evidence type="ECO:0000255" key="1">
    <source>
        <dbReference type="HAMAP-Rule" id="MF_01008"/>
    </source>
</evidence>
<evidence type="ECO:0000255" key="2">
    <source>
        <dbReference type="PROSITE-ProRule" id="PRU01076"/>
    </source>
</evidence>
<proteinExistence type="inferred from homology"/>
<sequence length="142" mass="15868">MFQGASALTLDAKGRMSVPARYREALQGQAEGRVTVTKHPDGCLLLFPRPEWEVFRAKIAALPMDAHWWRRIFLGNAMDVDLDSAGRILVSPELRMAAGLEKEVMLLGMGSHFELWDSQTYIAKEQAAMAQGMPDALKNFTF</sequence>
<organism>
    <name type="scientific">Burkholderia multivorans (strain ATCC 17616 / 249)</name>
    <dbReference type="NCBI Taxonomy" id="395019"/>
    <lineage>
        <taxon>Bacteria</taxon>
        <taxon>Pseudomonadati</taxon>
        <taxon>Pseudomonadota</taxon>
        <taxon>Betaproteobacteria</taxon>
        <taxon>Burkholderiales</taxon>
        <taxon>Burkholderiaceae</taxon>
        <taxon>Burkholderia</taxon>
        <taxon>Burkholderia cepacia complex</taxon>
    </lineage>
</organism>
<name>MRAZ_BURM1</name>
<dbReference type="EMBL" id="CP000868">
    <property type="protein sequence ID" value="ABX16529.1"/>
    <property type="molecule type" value="Genomic_DNA"/>
</dbReference>
<dbReference type="EMBL" id="AP009385">
    <property type="protein sequence ID" value="BAG42361.1"/>
    <property type="molecule type" value="Genomic_DNA"/>
</dbReference>
<dbReference type="RefSeq" id="WP_006400450.1">
    <property type="nucleotide sequence ID" value="NC_010804.1"/>
</dbReference>
<dbReference type="SMR" id="A9AJ25"/>
<dbReference type="STRING" id="395019.BMULJ_00393"/>
<dbReference type="GeneID" id="93172874"/>
<dbReference type="KEGG" id="bmj:BMULJ_00393"/>
<dbReference type="KEGG" id="bmu:Bmul_2845"/>
<dbReference type="eggNOG" id="COG2001">
    <property type="taxonomic scope" value="Bacteria"/>
</dbReference>
<dbReference type="HOGENOM" id="CLU_107907_2_1_4"/>
<dbReference type="Proteomes" id="UP000008815">
    <property type="component" value="Chromosome 1"/>
</dbReference>
<dbReference type="GO" id="GO:0005737">
    <property type="term" value="C:cytoplasm"/>
    <property type="evidence" value="ECO:0007669"/>
    <property type="project" value="UniProtKB-UniRule"/>
</dbReference>
<dbReference type="GO" id="GO:0009295">
    <property type="term" value="C:nucleoid"/>
    <property type="evidence" value="ECO:0007669"/>
    <property type="project" value="UniProtKB-SubCell"/>
</dbReference>
<dbReference type="GO" id="GO:0003700">
    <property type="term" value="F:DNA-binding transcription factor activity"/>
    <property type="evidence" value="ECO:0007669"/>
    <property type="project" value="UniProtKB-UniRule"/>
</dbReference>
<dbReference type="GO" id="GO:0000976">
    <property type="term" value="F:transcription cis-regulatory region binding"/>
    <property type="evidence" value="ECO:0007669"/>
    <property type="project" value="TreeGrafter"/>
</dbReference>
<dbReference type="GO" id="GO:2000143">
    <property type="term" value="P:negative regulation of DNA-templated transcription initiation"/>
    <property type="evidence" value="ECO:0007669"/>
    <property type="project" value="TreeGrafter"/>
</dbReference>
<dbReference type="CDD" id="cd16321">
    <property type="entry name" value="MraZ_C"/>
    <property type="match status" value="1"/>
</dbReference>
<dbReference type="CDD" id="cd16320">
    <property type="entry name" value="MraZ_N"/>
    <property type="match status" value="1"/>
</dbReference>
<dbReference type="Gene3D" id="3.40.1550.20">
    <property type="entry name" value="Transcriptional regulator MraZ domain"/>
    <property type="match status" value="1"/>
</dbReference>
<dbReference type="HAMAP" id="MF_01008">
    <property type="entry name" value="MraZ"/>
    <property type="match status" value="1"/>
</dbReference>
<dbReference type="InterPro" id="IPR003444">
    <property type="entry name" value="MraZ"/>
</dbReference>
<dbReference type="InterPro" id="IPR035644">
    <property type="entry name" value="MraZ_C"/>
</dbReference>
<dbReference type="InterPro" id="IPR020603">
    <property type="entry name" value="MraZ_dom"/>
</dbReference>
<dbReference type="InterPro" id="IPR035642">
    <property type="entry name" value="MraZ_N"/>
</dbReference>
<dbReference type="InterPro" id="IPR038619">
    <property type="entry name" value="MraZ_sf"/>
</dbReference>
<dbReference type="InterPro" id="IPR007159">
    <property type="entry name" value="SpoVT-AbrB_dom"/>
</dbReference>
<dbReference type="InterPro" id="IPR037914">
    <property type="entry name" value="SpoVT-AbrB_sf"/>
</dbReference>
<dbReference type="NCBIfam" id="TIGR00242">
    <property type="entry name" value="division/cell wall cluster transcriptional repressor MraZ"/>
    <property type="match status" value="1"/>
</dbReference>
<dbReference type="PANTHER" id="PTHR34701">
    <property type="entry name" value="TRANSCRIPTIONAL REGULATOR MRAZ"/>
    <property type="match status" value="1"/>
</dbReference>
<dbReference type="PANTHER" id="PTHR34701:SF1">
    <property type="entry name" value="TRANSCRIPTIONAL REGULATOR MRAZ"/>
    <property type="match status" value="1"/>
</dbReference>
<dbReference type="Pfam" id="PF02381">
    <property type="entry name" value="MraZ"/>
    <property type="match status" value="2"/>
</dbReference>
<dbReference type="SUPFAM" id="SSF89447">
    <property type="entry name" value="AbrB/MazE/MraZ-like"/>
    <property type="match status" value="1"/>
</dbReference>
<dbReference type="PROSITE" id="PS51740">
    <property type="entry name" value="SPOVT_ABRB"/>
    <property type="match status" value="2"/>
</dbReference>
<reference key="1">
    <citation type="submission" date="2007-10" db="EMBL/GenBank/DDBJ databases">
        <title>Complete sequence of chromosome 1 of Burkholderia multivorans ATCC 17616.</title>
        <authorList>
            <person name="Copeland A."/>
            <person name="Lucas S."/>
            <person name="Lapidus A."/>
            <person name="Barry K."/>
            <person name="Glavina del Rio T."/>
            <person name="Dalin E."/>
            <person name="Tice H."/>
            <person name="Pitluck S."/>
            <person name="Chain P."/>
            <person name="Malfatti S."/>
            <person name="Shin M."/>
            <person name="Vergez L."/>
            <person name="Schmutz J."/>
            <person name="Larimer F."/>
            <person name="Land M."/>
            <person name="Hauser L."/>
            <person name="Kyrpides N."/>
            <person name="Kim E."/>
            <person name="Tiedje J."/>
            <person name="Richardson P."/>
        </authorList>
    </citation>
    <scope>NUCLEOTIDE SEQUENCE [LARGE SCALE GENOMIC DNA]</scope>
    <source>
        <strain>ATCC 17616 / 249</strain>
    </source>
</reference>
<reference key="2">
    <citation type="submission" date="2007-04" db="EMBL/GenBank/DDBJ databases">
        <title>Complete genome sequence of Burkholderia multivorans ATCC 17616.</title>
        <authorList>
            <person name="Ohtsubo Y."/>
            <person name="Yamashita A."/>
            <person name="Kurokawa K."/>
            <person name="Takami H."/>
            <person name="Yuhara S."/>
            <person name="Nishiyama E."/>
            <person name="Endo R."/>
            <person name="Miyazaki R."/>
            <person name="Ono A."/>
            <person name="Yano K."/>
            <person name="Ito M."/>
            <person name="Sota M."/>
            <person name="Yuji N."/>
            <person name="Hattori M."/>
            <person name="Tsuda M."/>
        </authorList>
    </citation>
    <scope>NUCLEOTIDE SEQUENCE [LARGE SCALE GENOMIC DNA]</scope>
    <source>
        <strain>ATCC 17616 / 249</strain>
    </source>
</reference>
<feature type="chain" id="PRO_1000134775" description="Transcriptional regulator MraZ">
    <location>
        <begin position="1"/>
        <end position="142"/>
    </location>
</feature>
<feature type="domain" description="SpoVT-AbrB 1" evidence="2">
    <location>
        <begin position="5"/>
        <end position="51"/>
    </location>
</feature>
<feature type="domain" description="SpoVT-AbrB 2" evidence="2">
    <location>
        <begin position="77"/>
        <end position="120"/>
    </location>
</feature>